<name>ENO_HYDCU</name>
<sequence>MSLIKDIKARQVIDSRGNPTVEADVILDDGSKGRGISPSGASTGSREAIELRDGDKSKFGGKGVLKAVNNINTEIRDLLIGKEATDQAAIDNAMIALDGTDNKARLGANAILAVSIAVAQAAAQSKGLPLYAYLKTDDYKMPVPMMNIINGGEHADNSVDFQEFMIMPVGAPSMSEAIRYGAEIFHALKKVLHDKGYNTAVGDEGGFAPDLKSNEEAITVILEAIEAAGYKAGEDIMIAMDAASSELYKDGKYFLGSENKTLTSKEMVDLLSDWVTKYPIISIEDGLDESDWDGFKYQTEKDGKRLQIVGDDLFVTNPKILKEGIEKGIANSILIKINQIGTLTETFEAIQMAKDAGYTAVVSHRSGETEDTVIADIAVATGAGQIKTGSLSRTDRIAKYNQLIRIEEELGSKAVYPGKDAFYNLK</sequence>
<comment type="function">
    <text evidence="1">Catalyzes the reversible conversion of 2-phosphoglycerate (2-PG) into phosphoenolpyruvate (PEP). It is essential for the degradation of carbohydrates via glycolysis.</text>
</comment>
<comment type="catalytic activity">
    <reaction evidence="1">
        <text>(2R)-2-phosphoglycerate = phosphoenolpyruvate + H2O</text>
        <dbReference type="Rhea" id="RHEA:10164"/>
        <dbReference type="ChEBI" id="CHEBI:15377"/>
        <dbReference type="ChEBI" id="CHEBI:58289"/>
        <dbReference type="ChEBI" id="CHEBI:58702"/>
        <dbReference type="EC" id="4.2.1.11"/>
    </reaction>
</comment>
<comment type="cofactor">
    <cofactor evidence="1">
        <name>Mg(2+)</name>
        <dbReference type="ChEBI" id="CHEBI:18420"/>
    </cofactor>
    <text evidence="1">Binds a second Mg(2+) ion via substrate during catalysis.</text>
</comment>
<comment type="pathway">
    <text evidence="1">Carbohydrate degradation; glycolysis; pyruvate from D-glyceraldehyde 3-phosphate: step 4/5.</text>
</comment>
<comment type="subunit">
    <text evidence="1">Component of the RNA degradosome, a multiprotein complex involved in RNA processing and mRNA degradation.</text>
</comment>
<comment type="subcellular location">
    <subcellularLocation>
        <location evidence="1">Cytoplasm</location>
    </subcellularLocation>
    <subcellularLocation>
        <location evidence="1">Secreted</location>
    </subcellularLocation>
    <subcellularLocation>
        <location evidence="1">Cell surface</location>
    </subcellularLocation>
    <text evidence="1">Fractions of enolase are present in both the cytoplasm and on the cell surface.</text>
</comment>
<comment type="similarity">
    <text evidence="1">Belongs to the enolase family.</text>
</comment>
<evidence type="ECO:0000255" key="1">
    <source>
        <dbReference type="HAMAP-Rule" id="MF_00318"/>
    </source>
</evidence>
<gene>
    <name evidence="1" type="primary">eno</name>
    <name type="ordered locus">Tcr_1260</name>
</gene>
<dbReference type="EC" id="4.2.1.11" evidence="1"/>
<dbReference type="EMBL" id="CP000109">
    <property type="protein sequence ID" value="ABB41855.1"/>
    <property type="molecule type" value="Genomic_DNA"/>
</dbReference>
<dbReference type="SMR" id="Q31G68"/>
<dbReference type="STRING" id="317025.Tcr_1260"/>
<dbReference type="KEGG" id="tcx:Tcr_1260"/>
<dbReference type="eggNOG" id="COG0148">
    <property type="taxonomic scope" value="Bacteria"/>
</dbReference>
<dbReference type="HOGENOM" id="CLU_031223_2_1_6"/>
<dbReference type="OrthoDB" id="9804716at2"/>
<dbReference type="UniPathway" id="UPA00109">
    <property type="reaction ID" value="UER00187"/>
</dbReference>
<dbReference type="GO" id="GO:0009986">
    <property type="term" value="C:cell surface"/>
    <property type="evidence" value="ECO:0007669"/>
    <property type="project" value="UniProtKB-SubCell"/>
</dbReference>
<dbReference type="GO" id="GO:0005576">
    <property type="term" value="C:extracellular region"/>
    <property type="evidence" value="ECO:0007669"/>
    <property type="project" value="UniProtKB-SubCell"/>
</dbReference>
<dbReference type="GO" id="GO:0000015">
    <property type="term" value="C:phosphopyruvate hydratase complex"/>
    <property type="evidence" value="ECO:0007669"/>
    <property type="project" value="InterPro"/>
</dbReference>
<dbReference type="GO" id="GO:0000287">
    <property type="term" value="F:magnesium ion binding"/>
    <property type="evidence" value="ECO:0007669"/>
    <property type="project" value="UniProtKB-UniRule"/>
</dbReference>
<dbReference type="GO" id="GO:0004634">
    <property type="term" value="F:phosphopyruvate hydratase activity"/>
    <property type="evidence" value="ECO:0007669"/>
    <property type="project" value="UniProtKB-UniRule"/>
</dbReference>
<dbReference type="GO" id="GO:0006096">
    <property type="term" value="P:glycolytic process"/>
    <property type="evidence" value="ECO:0007669"/>
    <property type="project" value="UniProtKB-UniRule"/>
</dbReference>
<dbReference type="CDD" id="cd03313">
    <property type="entry name" value="enolase"/>
    <property type="match status" value="1"/>
</dbReference>
<dbReference type="FunFam" id="3.20.20.120:FF:000001">
    <property type="entry name" value="Enolase"/>
    <property type="match status" value="1"/>
</dbReference>
<dbReference type="FunFam" id="3.30.390.10:FF:000001">
    <property type="entry name" value="Enolase"/>
    <property type="match status" value="1"/>
</dbReference>
<dbReference type="Gene3D" id="3.20.20.120">
    <property type="entry name" value="Enolase-like C-terminal domain"/>
    <property type="match status" value="1"/>
</dbReference>
<dbReference type="Gene3D" id="3.30.390.10">
    <property type="entry name" value="Enolase-like, N-terminal domain"/>
    <property type="match status" value="1"/>
</dbReference>
<dbReference type="HAMAP" id="MF_00318">
    <property type="entry name" value="Enolase"/>
    <property type="match status" value="1"/>
</dbReference>
<dbReference type="InterPro" id="IPR000941">
    <property type="entry name" value="Enolase"/>
</dbReference>
<dbReference type="InterPro" id="IPR036849">
    <property type="entry name" value="Enolase-like_C_sf"/>
</dbReference>
<dbReference type="InterPro" id="IPR029017">
    <property type="entry name" value="Enolase-like_N"/>
</dbReference>
<dbReference type="InterPro" id="IPR020810">
    <property type="entry name" value="Enolase_C"/>
</dbReference>
<dbReference type="InterPro" id="IPR020809">
    <property type="entry name" value="Enolase_CS"/>
</dbReference>
<dbReference type="InterPro" id="IPR020811">
    <property type="entry name" value="Enolase_N"/>
</dbReference>
<dbReference type="NCBIfam" id="TIGR01060">
    <property type="entry name" value="eno"/>
    <property type="match status" value="1"/>
</dbReference>
<dbReference type="PANTHER" id="PTHR11902">
    <property type="entry name" value="ENOLASE"/>
    <property type="match status" value="1"/>
</dbReference>
<dbReference type="PANTHER" id="PTHR11902:SF1">
    <property type="entry name" value="ENOLASE"/>
    <property type="match status" value="1"/>
</dbReference>
<dbReference type="Pfam" id="PF00113">
    <property type="entry name" value="Enolase_C"/>
    <property type="match status" value="1"/>
</dbReference>
<dbReference type="Pfam" id="PF03952">
    <property type="entry name" value="Enolase_N"/>
    <property type="match status" value="1"/>
</dbReference>
<dbReference type="PIRSF" id="PIRSF001400">
    <property type="entry name" value="Enolase"/>
    <property type="match status" value="1"/>
</dbReference>
<dbReference type="PRINTS" id="PR00148">
    <property type="entry name" value="ENOLASE"/>
</dbReference>
<dbReference type="SFLD" id="SFLDS00001">
    <property type="entry name" value="Enolase"/>
    <property type="match status" value="1"/>
</dbReference>
<dbReference type="SFLD" id="SFLDF00002">
    <property type="entry name" value="enolase"/>
    <property type="match status" value="1"/>
</dbReference>
<dbReference type="SMART" id="SM01192">
    <property type="entry name" value="Enolase_C"/>
    <property type="match status" value="1"/>
</dbReference>
<dbReference type="SMART" id="SM01193">
    <property type="entry name" value="Enolase_N"/>
    <property type="match status" value="1"/>
</dbReference>
<dbReference type="SUPFAM" id="SSF51604">
    <property type="entry name" value="Enolase C-terminal domain-like"/>
    <property type="match status" value="1"/>
</dbReference>
<dbReference type="SUPFAM" id="SSF54826">
    <property type="entry name" value="Enolase N-terminal domain-like"/>
    <property type="match status" value="1"/>
</dbReference>
<dbReference type="PROSITE" id="PS00164">
    <property type="entry name" value="ENOLASE"/>
    <property type="match status" value="1"/>
</dbReference>
<organism>
    <name type="scientific">Hydrogenovibrio crunogenus (strain DSM 25203 / XCL-2)</name>
    <name type="common">Thiomicrospira crunogena</name>
    <dbReference type="NCBI Taxonomy" id="317025"/>
    <lineage>
        <taxon>Bacteria</taxon>
        <taxon>Pseudomonadati</taxon>
        <taxon>Pseudomonadota</taxon>
        <taxon>Gammaproteobacteria</taxon>
        <taxon>Thiotrichales</taxon>
        <taxon>Piscirickettsiaceae</taxon>
        <taxon>Hydrogenovibrio</taxon>
    </lineage>
</organism>
<protein>
    <recommendedName>
        <fullName evidence="1">Enolase</fullName>
        <ecNumber evidence="1">4.2.1.11</ecNumber>
    </recommendedName>
    <alternativeName>
        <fullName evidence="1">2-phospho-D-glycerate hydro-lyase</fullName>
    </alternativeName>
    <alternativeName>
        <fullName evidence="1">2-phosphoglycerate dehydratase</fullName>
    </alternativeName>
</protein>
<reference key="1">
    <citation type="journal article" date="2006" name="PLoS Biol.">
        <title>The genome of deep-sea vent chemolithoautotroph Thiomicrospira crunogena XCL-2.</title>
        <authorList>
            <person name="Scott K.M."/>
            <person name="Sievert S.M."/>
            <person name="Abril F.N."/>
            <person name="Ball L.A."/>
            <person name="Barrett C.J."/>
            <person name="Blake R.A."/>
            <person name="Boller A.J."/>
            <person name="Chain P.S.G."/>
            <person name="Clark J.A."/>
            <person name="Davis C.R."/>
            <person name="Detter C."/>
            <person name="Do K.F."/>
            <person name="Dobrinski K.P."/>
            <person name="Faza B.I."/>
            <person name="Fitzpatrick K.A."/>
            <person name="Freyermuth S.K."/>
            <person name="Harmer T.L."/>
            <person name="Hauser L.J."/>
            <person name="Huegler M."/>
            <person name="Kerfeld C.A."/>
            <person name="Klotz M.G."/>
            <person name="Kong W.W."/>
            <person name="Land M."/>
            <person name="Lapidus A."/>
            <person name="Larimer F.W."/>
            <person name="Longo D.L."/>
            <person name="Lucas S."/>
            <person name="Malfatti S.A."/>
            <person name="Massey S.E."/>
            <person name="Martin D.D."/>
            <person name="McCuddin Z."/>
            <person name="Meyer F."/>
            <person name="Moore J.L."/>
            <person name="Ocampo L.H. Jr."/>
            <person name="Paul J.H."/>
            <person name="Paulsen I.T."/>
            <person name="Reep D.K."/>
            <person name="Ren Q."/>
            <person name="Ross R.L."/>
            <person name="Sato P.Y."/>
            <person name="Thomas P."/>
            <person name="Tinkham L.E."/>
            <person name="Zeruth G.T."/>
        </authorList>
    </citation>
    <scope>NUCLEOTIDE SEQUENCE [LARGE SCALE GENOMIC DNA]</scope>
    <source>
        <strain>DSM 25203 / XCL-2</strain>
    </source>
</reference>
<proteinExistence type="inferred from homology"/>
<keyword id="KW-0963">Cytoplasm</keyword>
<keyword id="KW-0324">Glycolysis</keyword>
<keyword id="KW-0456">Lyase</keyword>
<keyword id="KW-0460">Magnesium</keyword>
<keyword id="KW-0479">Metal-binding</keyword>
<keyword id="KW-0964">Secreted</keyword>
<feature type="chain" id="PRO_0000267131" description="Enolase">
    <location>
        <begin position="1"/>
        <end position="426"/>
    </location>
</feature>
<feature type="active site" description="Proton donor" evidence="1">
    <location>
        <position position="204"/>
    </location>
</feature>
<feature type="active site" description="Proton acceptor" evidence="1">
    <location>
        <position position="336"/>
    </location>
</feature>
<feature type="binding site" evidence="1">
    <location>
        <position position="162"/>
    </location>
    <ligand>
        <name>(2R)-2-phosphoglycerate</name>
        <dbReference type="ChEBI" id="CHEBI:58289"/>
    </ligand>
</feature>
<feature type="binding site" evidence="1">
    <location>
        <position position="241"/>
    </location>
    <ligand>
        <name>Mg(2+)</name>
        <dbReference type="ChEBI" id="CHEBI:18420"/>
    </ligand>
</feature>
<feature type="binding site" evidence="1">
    <location>
        <position position="284"/>
    </location>
    <ligand>
        <name>Mg(2+)</name>
        <dbReference type="ChEBI" id="CHEBI:18420"/>
    </ligand>
</feature>
<feature type="binding site" evidence="1">
    <location>
        <position position="311"/>
    </location>
    <ligand>
        <name>Mg(2+)</name>
        <dbReference type="ChEBI" id="CHEBI:18420"/>
    </ligand>
</feature>
<feature type="binding site" evidence="1">
    <location>
        <position position="336"/>
    </location>
    <ligand>
        <name>(2R)-2-phosphoglycerate</name>
        <dbReference type="ChEBI" id="CHEBI:58289"/>
    </ligand>
</feature>
<feature type="binding site" evidence="1">
    <location>
        <position position="365"/>
    </location>
    <ligand>
        <name>(2R)-2-phosphoglycerate</name>
        <dbReference type="ChEBI" id="CHEBI:58289"/>
    </ligand>
</feature>
<feature type="binding site" evidence="1">
    <location>
        <position position="366"/>
    </location>
    <ligand>
        <name>(2R)-2-phosphoglycerate</name>
        <dbReference type="ChEBI" id="CHEBI:58289"/>
    </ligand>
</feature>
<feature type="binding site" evidence="1">
    <location>
        <position position="387"/>
    </location>
    <ligand>
        <name>(2R)-2-phosphoglycerate</name>
        <dbReference type="ChEBI" id="CHEBI:58289"/>
    </ligand>
</feature>
<accession>Q31G68</accession>